<evidence type="ECO:0000255" key="1">
    <source>
        <dbReference type="HAMAP-Rule" id="MF_00446"/>
    </source>
</evidence>
<name>PAND_BACHK</name>
<sequence length="127" mass="13909">MFRTMMRAKLHRATVTEANLNYVGSITIDEDLMDAVNIVENEKVQIVNNNNGARLETYVIKGERGSGVVCLNGAAARLVQPGDKVIIICYGLVAEENIHKQEPKIAVLDDDNQIIEMLGAEKAGTIL</sequence>
<gene>
    <name evidence="1" type="primary">panD</name>
    <name type="ordered locus">BT9727_1423</name>
</gene>
<comment type="function">
    <text evidence="1">Catalyzes the pyruvoyl-dependent decarboxylation of aspartate to produce beta-alanine.</text>
</comment>
<comment type="catalytic activity">
    <reaction evidence="1">
        <text>L-aspartate + H(+) = beta-alanine + CO2</text>
        <dbReference type="Rhea" id="RHEA:19497"/>
        <dbReference type="ChEBI" id="CHEBI:15378"/>
        <dbReference type="ChEBI" id="CHEBI:16526"/>
        <dbReference type="ChEBI" id="CHEBI:29991"/>
        <dbReference type="ChEBI" id="CHEBI:57966"/>
        <dbReference type="EC" id="4.1.1.11"/>
    </reaction>
</comment>
<comment type="cofactor">
    <cofactor evidence="1">
        <name>pyruvate</name>
        <dbReference type="ChEBI" id="CHEBI:15361"/>
    </cofactor>
    <text evidence="1">Binds 1 pyruvoyl group covalently per subunit.</text>
</comment>
<comment type="pathway">
    <text evidence="1">Cofactor biosynthesis; (R)-pantothenate biosynthesis; beta-alanine from L-aspartate: step 1/1.</text>
</comment>
<comment type="subunit">
    <text evidence="1">Heterooctamer of four alpha and four beta subunits.</text>
</comment>
<comment type="subcellular location">
    <subcellularLocation>
        <location evidence="1">Cytoplasm</location>
    </subcellularLocation>
</comment>
<comment type="PTM">
    <text evidence="1">Is synthesized initially as an inactive proenzyme, which is activated by self-cleavage at a specific serine bond to produce a beta-subunit with a hydroxyl group at its C-terminus and an alpha-subunit with a pyruvoyl group at its N-terminus.</text>
</comment>
<comment type="similarity">
    <text evidence="1">Belongs to the PanD family.</text>
</comment>
<keyword id="KW-0068">Autocatalytic cleavage</keyword>
<keyword id="KW-0963">Cytoplasm</keyword>
<keyword id="KW-0210">Decarboxylase</keyword>
<keyword id="KW-0456">Lyase</keyword>
<keyword id="KW-0566">Pantothenate biosynthesis</keyword>
<keyword id="KW-0670">Pyruvate</keyword>
<keyword id="KW-0704">Schiff base</keyword>
<keyword id="KW-0865">Zymogen</keyword>
<accession>Q6HL14</accession>
<organism>
    <name type="scientific">Bacillus thuringiensis subsp. konkukian (strain 97-27)</name>
    <dbReference type="NCBI Taxonomy" id="281309"/>
    <lineage>
        <taxon>Bacteria</taxon>
        <taxon>Bacillati</taxon>
        <taxon>Bacillota</taxon>
        <taxon>Bacilli</taxon>
        <taxon>Bacillales</taxon>
        <taxon>Bacillaceae</taxon>
        <taxon>Bacillus</taxon>
        <taxon>Bacillus cereus group</taxon>
    </lineage>
</organism>
<dbReference type="EC" id="4.1.1.11" evidence="1"/>
<dbReference type="EMBL" id="AE017355">
    <property type="protein sequence ID" value="AAT63198.1"/>
    <property type="molecule type" value="Genomic_DNA"/>
</dbReference>
<dbReference type="RefSeq" id="WP_000490176.1">
    <property type="nucleotide sequence ID" value="NC_005957.1"/>
</dbReference>
<dbReference type="RefSeq" id="YP_035757.1">
    <property type="nucleotide sequence ID" value="NC_005957.1"/>
</dbReference>
<dbReference type="SMR" id="Q6HL14"/>
<dbReference type="GeneID" id="75084853"/>
<dbReference type="KEGG" id="btk:BT9727_1423"/>
<dbReference type="PATRIC" id="fig|281309.8.peg.1495"/>
<dbReference type="HOGENOM" id="CLU_115305_2_0_9"/>
<dbReference type="UniPathway" id="UPA00028">
    <property type="reaction ID" value="UER00002"/>
</dbReference>
<dbReference type="Proteomes" id="UP000001301">
    <property type="component" value="Chromosome"/>
</dbReference>
<dbReference type="GO" id="GO:0005829">
    <property type="term" value="C:cytosol"/>
    <property type="evidence" value="ECO:0007669"/>
    <property type="project" value="TreeGrafter"/>
</dbReference>
<dbReference type="GO" id="GO:0004068">
    <property type="term" value="F:aspartate 1-decarboxylase activity"/>
    <property type="evidence" value="ECO:0007669"/>
    <property type="project" value="UniProtKB-UniRule"/>
</dbReference>
<dbReference type="GO" id="GO:0006523">
    <property type="term" value="P:alanine biosynthetic process"/>
    <property type="evidence" value="ECO:0007669"/>
    <property type="project" value="InterPro"/>
</dbReference>
<dbReference type="GO" id="GO:0015940">
    <property type="term" value="P:pantothenate biosynthetic process"/>
    <property type="evidence" value="ECO:0007669"/>
    <property type="project" value="UniProtKB-UniRule"/>
</dbReference>
<dbReference type="CDD" id="cd06919">
    <property type="entry name" value="Asp_decarbox"/>
    <property type="match status" value="1"/>
</dbReference>
<dbReference type="Gene3D" id="2.40.40.20">
    <property type="match status" value="1"/>
</dbReference>
<dbReference type="HAMAP" id="MF_00446">
    <property type="entry name" value="PanD"/>
    <property type="match status" value="1"/>
</dbReference>
<dbReference type="InterPro" id="IPR009010">
    <property type="entry name" value="Asp_de-COase-like_dom_sf"/>
</dbReference>
<dbReference type="InterPro" id="IPR003190">
    <property type="entry name" value="Asp_decarbox"/>
</dbReference>
<dbReference type="NCBIfam" id="TIGR00223">
    <property type="entry name" value="panD"/>
    <property type="match status" value="1"/>
</dbReference>
<dbReference type="PANTHER" id="PTHR21012">
    <property type="entry name" value="ASPARTATE 1-DECARBOXYLASE"/>
    <property type="match status" value="1"/>
</dbReference>
<dbReference type="PANTHER" id="PTHR21012:SF0">
    <property type="entry name" value="ASPARTATE 1-DECARBOXYLASE"/>
    <property type="match status" value="1"/>
</dbReference>
<dbReference type="Pfam" id="PF02261">
    <property type="entry name" value="Asp_decarbox"/>
    <property type="match status" value="1"/>
</dbReference>
<dbReference type="PIRSF" id="PIRSF006246">
    <property type="entry name" value="Asp_decarbox"/>
    <property type="match status" value="1"/>
</dbReference>
<dbReference type="SUPFAM" id="SSF50692">
    <property type="entry name" value="ADC-like"/>
    <property type="match status" value="1"/>
</dbReference>
<protein>
    <recommendedName>
        <fullName evidence="1">Aspartate 1-decarboxylase</fullName>
        <ecNumber evidence="1">4.1.1.11</ecNumber>
    </recommendedName>
    <alternativeName>
        <fullName evidence="1">Aspartate alpha-decarboxylase</fullName>
    </alternativeName>
    <component>
        <recommendedName>
            <fullName evidence="1">Aspartate 1-decarboxylase beta chain</fullName>
        </recommendedName>
    </component>
    <component>
        <recommendedName>
            <fullName evidence="1">Aspartate 1-decarboxylase alpha chain</fullName>
        </recommendedName>
    </component>
</protein>
<feature type="chain" id="PRO_0000023029" description="Aspartate 1-decarboxylase beta chain" evidence="1">
    <location>
        <begin position="1"/>
        <end position="24"/>
    </location>
</feature>
<feature type="chain" id="PRO_0000023030" description="Aspartate 1-decarboxylase alpha chain" evidence="1">
    <location>
        <begin position="25"/>
        <end position="127"/>
    </location>
</feature>
<feature type="active site" description="Schiff-base intermediate with substrate; via pyruvic acid" evidence="1">
    <location>
        <position position="25"/>
    </location>
</feature>
<feature type="active site" description="Proton donor" evidence="1">
    <location>
        <position position="58"/>
    </location>
</feature>
<feature type="binding site" evidence="1">
    <location>
        <position position="57"/>
    </location>
    <ligand>
        <name>substrate</name>
    </ligand>
</feature>
<feature type="binding site" evidence="1">
    <location>
        <begin position="73"/>
        <end position="75"/>
    </location>
    <ligand>
        <name>substrate</name>
    </ligand>
</feature>
<feature type="modified residue" description="Pyruvic acid (Ser)" evidence="1">
    <location>
        <position position="25"/>
    </location>
</feature>
<reference key="1">
    <citation type="journal article" date="2006" name="J. Bacteriol.">
        <title>Pathogenomic sequence analysis of Bacillus cereus and Bacillus thuringiensis isolates closely related to Bacillus anthracis.</title>
        <authorList>
            <person name="Han C.S."/>
            <person name="Xie G."/>
            <person name="Challacombe J.F."/>
            <person name="Altherr M.R."/>
            <person name="Bhotika S.S."/>
            <person name="Bruce D."/>
            <person name="Campbell C.S."/>
            <person name="Campbell M.L."/>
            <person name="Chen J."/>
            <person name="Chertkov O."/>
            <person name="Cleland C."/>
            <person name="Dimitrijevic M."/>
            <person name="Doggett N.A."/>
            <person name="Fawcett J.J."/>
            <person name="Glavina T."/>
            <person name="Goodwin L.A."/>
            <person name="Hill K.K."/>
            <person name="Hitchcock P."/>
            <person name="Jackson P.J."/>
            <person name="Keim P."/>
            <person name="Kewalramani A.R."/>
            <person name="Longmire J."/>
            <person name="Lucas S."/>
            <person name="Malfatti S."/>
            <person name="McMurry K."/>
            <person name="Meincke L.J."/>
            <person name="Misra M."/>
            <person name="Moseman B.L."/>
            <person name="Mundt M."/>
            <person name="Munk A.C."/>
            <person name="Okinaka R.T."/>
            <person name="Parson-Quintana B."/>
            <person name="Reilly L.P."/>
            <person name="Richardson P."/>
            <person name="Robinson D.L."/>
            <person name="Rubin E."/>
            <person name="Saunders E."/>
            <person name="Tapia R."/>
            <person name="Tesmer J.G."/>
            <person name="Thayer N."/>
            <person name="Thompson L.S."/>
            <person name="Tice H."/>
            <person name="Ticknor L.O."/>
            <person name="Wills P.L."/>
            <person name="Brettin T.S."/>
            <person name="Gilna P."/>
        </authorList>
    </citation>
    <scope>NUCLEOTIDE SEQUENCE [LARGE SCALE GENOMIC DNA]</scope>
    <source>
        <strain>97-27</strain>
    </source>
</reference>
<proteinExistence type="inferred from homology"/>